<accession>Q0TBW9</accession>
<reference key="1">
    <citation type="journal article" date="2006" name="Mol. Microbiol.">
        <title>Role of pathogenicity island-associated integrases in the genome plasticity of uropathogenic Escherichia coli strain 536.</title>
        <authorList>
            <person name="Hochhut B."/>
            <person name="Wilde C."/>
            <person name="Balling G."/>
            <person name="Middendorf B."/>
            <person name="Dobrindt U."/>
            <person name="Brzuszkiewicz E."/>
            <person name="Gottschalk G."/>
            <person name="Carniel E."/>
            <person name="Hacker J."/>
        </authorList>
    </citation>
    <scope>NUCLEOTIDE SEQUENCE [LARGE SCALE GENOMIC DNA]</scope>
    <source>
        <strain>536 / UPEC</strain>
    </source>
</reference>
<protein>
    <recommendedName>
        <fullName evidence="1">Universal stress protein B</fullName>
    </recommendedName>
</protein>
<keyword id="KW-0997">Cell inner membrane</keyword>
<keyword id="KW-1003">Cell membrane</keyword>
<keyword id="KW-0472">Membrane</keyword>
<keyword id="KW-0812">Transmembrane</keyword>
<keyword id="KW-1133">Transmembrane helix</keyword>
<name>USPB_ECOL5</name>
<comment type="subcellular location">
    <subcellularLocation>
        <location evidence="1">Cell inner membrane</location>
        <topology evidence="1">Multi-pass membrane protein</topology>
    </subcellularLocation>
</comment>
<comment type="similarity">
    <text evidence="1">Belongs to the universal stress protein B family.</text>
</comment>
<sequence>MISTVALFWALCVVCIVNMARYFSSLRALLVVLRNCDPLLYQYVDGGGFFTSHGQPNKQVRLVWYIYAQRYRDHHDDEFIRRCERVRRQFILTSALCGLVVVSLIALMIWH</sequence>
<organism>
    <name type="scientific">Escherichia coli O6:K15:H31 (strain 536 / UPEC)</name>
    <dbReference type="NCBI Taxonomy" id="362663"/>
    <lineage>
        <taxon>Bacteria</taxon>
        <taxon>Pseudomonadati</taxon>
        <taxon>Pseudomonadota</taxon>
        <taxon>Gammaproteobacteria</taxon>
        <taxon>Enterobacterales</taxon>
        <taxon>Enterobacteriaceae</taxon>
        <taxon>Escherichia</taxon>
    </lineage>
</organism>
<proteinExistence type="inferred from homology"/>
<evidence type="ECO:0000255" key="1">
    <source>
        <dbReference type="HAMAP-Rule" id="MF_01088"/>
    </source>
</evidence>
<feature type="chain" id="PRO_1000064874" description="Universal stress protein B">
    <location>
        <begin position="1"/>
        <end position="111"/>
    </location>
</feature>
<feature type="transmembrane region" description="Helical" evidence="1">
    <location>
        <begin position="1"/>
        <end position="21"/>
    </location>
</feature>
<feature type="transmembrane region" description="Helical" evidence="1">
    <location>
        <begin position="90"/>
        <end position="110"/>
    </location>
</feature>
<dbReference type="EMBL" id="CP000247">
    <property type="protein sequence ID" value="ABG71560.1"/>
    <property type="molecule type" value="Genomic_DNA"/>
</dbReference>
<dbReference type="RefSeq" id="WP_000626187.1">
    <property type="nucleotide sequence ID" value="NC_008253.1"/>
</dbReference>
<dbReference type="SMR" id="Q0TBW9"/>
<dbReference type="GeneID" id="93778499"/>
<dbReference type="KEGG" id="ecp:ECP_3584"/>
<dbReference type="HOGENOM" id="CLU_151816_0_0_6"/>
<dbReference type="Proteomes" id="UP000009182">
    <property type="component" value="Chromosome"/>
</dbReference>
<dbReference type="GO" id="GO:0005886">
    <property type="term" value="C:plasma membrane"/>
    <property type="evidence" value="ECO:0007669"/>
    <property type="project" value="UniProtKB-SubCell"/>
</dbReference>
<dbReference type="HAMAP" id="MF_01088">
    <property type="entry name" value="UspB"/>
    <property type="match status" value="1"/>
</dbReference>
<dbReference type="InterPro" id="IPR019598">
    <property type="entry name" value="Universal_stress_protein_B"/>
</dbReference>
<dbReference type="NCBIfam" id="NF003435">
    <property type="entry name" value="PRK04960.1"/>
    <property type="match status" value="1"/>
</dbReference>
<dbReference type="Pfam" id="PF10625">
    <property type="entry name" value="UspB"/>
    <property type="match status" value="1"/>
</dbReference>
<gene>
    <name evidence="1" type="primary">uspB</name>
    <name type="ordered locus">ECP_3584</name>
</gene>